<gene>
    <name type="primary">lpl5</name>
    <name type="ordered locus">SAV0441</name>
</gene>
<protein>
    <recommendedName>
        <fullName>Uncharacterized lipoprotein SAV0441</fullName>
    </recommendedName>
</protein>
<organism>
    <name type="scientific">Staphylococcus aureus (strain Mu50 / ATCC 700699)</name>
    <dbReference type="NCBI Taxonomy" id="158878"/>
    <lineage>
        <taxon>Bacteria</taxon>
        <taxon>Bacillati</taxon>
        <taxon>Bacillota</taxon>
        <taxon>Bacilli</taxon>
        <taxon>Bacillales</taxon>
        <taxon>Staphylococcaceae</taxon>
        <taxon>Staphylococcus</taxon>
    </lineage>
</organism>
<keyword id="KW-1003">Cell membrane</keyword>
<keyword id="KW-0449">Lipoprotein</keyword>
<keyword id="KW-0472">Membrane</keyword>
<keyword id="KW-0564">Palmitate</keyword>
<keyword id="KW-0732">Signal</keyword>
<reference key="1">
    <citation type="journal article" date="2001" name="Lancet">
        <title>Whole genome sequencing of meticillin-resistant Staphylococcus aureus.</title>
        <authorList>
            <person name="Kuroda M."/>
            <person name="Ohta T."/>
            <person name="Uchiyama I."/>
            <person name="Baba T."/>
            <person name="Yuzawa H."/>
            <person name="Kobayashi I."/>
            <person name="Cui L."/>
            <person name="Oguchi A."/>
            <person name="Aoki K."/>
            <person name="Nagai Y."/>
            <person name="Lian J.-Q."/>
            <person name="Ito T."/>
            <person name="Kanamori M."/>
            <person name="Matsumaru H."/>
            <person name="Maruyama A."/>
            <person name="Murakami H."/>
            <person name="Hosoyama A."/>
            <person name="Mizutani-Ui Y."/>
            <person name="Takahashi N.K."/>
            <person name="Sawano T."/>
            <person name="Inoue R."/>
            <person name="Kaito C."/>
            <person name="Sekimizu K."/>
            <person name="Hirakawa H."/>
            <person name="Kuhara S."/>
            <person name="Goto S."/>
            <person name="Yabuzaki J."/>
            <person name="Kanehisa M."/>
            <person name="Yamashita A."/>
            <person name="Oshima K."/>
            <person name="Furuya K."/>
            <person name="Yoshino C."/>
            <person name="Shiba T."/>
            <person name="Hattori M."/>
            <person name="Ogasawara N."/>
            <person name="Hayashi H."/>
            <person name="Hiramatsu K."/>
        </authorList>
    </citation>
    <scope>NUCLEOTIDE SEQUENCE [LARGE SCALE GENOMIC DNA]</scope>
    <source>
        <strain>Mu50 / ATCC 700699</strain>
    </source>
</reference>
<accession>Q99WG1</accession>
<sequence>MGYSKRFALYISILILIVMVAGCGKSDETKEDSKEEQIKKSFAKTLDMYPIKNLEDLYDKEGYRDGEFKKGDKGTWVLYSAIVSQPKGESLKSRGMILKLDRNKRTAKGSYIIRELKEDKNHDVQKNEKKYPVKLVNNRIVLVKDVKDKKLKNEIESFELFSQYGNFNHFDRNEITNISYNPNAPNYSAEYKMKKNDRNIQQLKKRFNLKTSKTPKLLFKGSGDIKGSSVGYKEIEIIFSRSKEEAFIMLTALSSFQVTK</sequence>
<name>Y441_STAAM</name>
<evidence type="ECO:0000255" key="1">
    <source>
        <dbReference type="PROSITE-ProRule" id="PRU00303"/>
    </source>
</evidence>
<evidence type="ECO:0000305" key="2"/>
<dbReference type="EMBL" id="BA000017">
    <property type="protein sequence ID" value="BAB56603.1"/>
    <property type="molecule type" value="Genomic_DNA"/>
</dbReference>
<dbReference type="RefSeq" id="WP_001557596.1">
    <property type="nucleotide sequence ID" value="NC_002758.2"/>
</dbReference>
<dbReference type="SMR" id="Q99WG1"/>
<dbReference type="DNASU" id="1120398"/>
<dbReference type="KEGG" id="sav:SAV0441"/>
<dbReference type="HOGENOM" id="CLU_071589_0_1_9"/>
<dbReference type="PhylomeDB" id="Q99WG1"/>
<dbReference type="Proteomes" id="UP000002481">
    <property type="component" value="Chromosome"/>
</dbReference>
<dbReference type="GO" id="GO:0005886">
    <property type="term" value="C:plasma membrane"/>
    <property type="evidence" value="ECO:0007669"/>
    <property type="project" value="UniProtKB-SubCell"/>
</dbReference>
<dbReference type="Gene3D" id="2.50.20.40">
    <property type="match status" value="1"/>
</dbReference>
<dbReference type="InterPro" id="IPR007595">
    <property type="entry name" value="Csa"/>
</dbReference>
<dbReference type="InterPro" id="IPR038641">
    <property type="entry name" value="Csa_sf"/>
</dbReference>
<dbReference type="NCBIfam" id="TIGR01742">
    <property type="entry name" value="SA_tandem_lipo"/>
    <property type="match status" value="1"/>
</dbReference>
<dbReference type="Pfam" id="PF04507">
    <property type="entry name" value="DUF576"/>
    <property type="match status" value="1"/>
</dbReference>
<dbReference type="PROSITE" id="PS51257">
    <property type="entry name" value="PROKAR_LIPOPROTEIN"/>
    <property type="match status" value="1"/>
</dbReference>
<comment type="subcellular location">
    <subcellularLocation>
        <location evidence="1">Cell membrane</location>
        <topology evidence="1">Lipid-anchor</topology>
    </subcellularLocation>
</comment>
<comment type="similarity">
    <text evidence="2">Belongs to the staphylococcal tandem lipoprotein family.</text>
</comment>
<proteinExistence type="inferred from homology"/>
<feature type="signal peptide" evidence="1">
    <location>
        <begin position="1"/>
        <end position="22"/>
    </location>
</feature>
<feature type="chain" id="PRO_0000282128" description="Uncharacterized lipoprotein SAV0441">
    <location>
        <begin position="23"/>
        <end position="260"/>
    </location>
</feature>
<feature type="lipid moiety-binding region" description="N-palmitoyl cysteine" evidence="1">
    <location>
        <position position="23"/>
    </location>
</feature>
<feature type="lipid moiety-binding region" description="S-diacylglycerol cysteine" evidence="1">
    <location>
        <position position="23"/>
    </location>
</feature>